<accession>B9KZX2</accession>
<feature type="chain" id="PRO_1000166256" description="Large ribosomal subunit protein uL18">
    <location>
        <begin position="1"/>
        <end position="124"/>
    </location>
</feature>
<protein>
    <recommendedName>
        <fullName evidence="1">Large ribosomal subunit protein uL18</fullName>
    </recommendedName>
    <alternativeName>
        <fullName evidence="2">50S ribosomal protein L18</fullName>
    </alternativeName>
</protein>
<gene>
    <name evidence="1" type="primary">rplR</name>
    <name type="ordered locus">trd_0969</name>
</gene>
<evidence type="ECO:0000255" key="1">
    <source>
        <dbReference type="HAMAP-Rule" id="MF_01337"/>
    </source>
</evidence>
<evidence type="ECO:0000305" key="2"/>
<organism>
    <name type="scientific">Thermomicrobium roseum (strain ATCC 27502 / DSM 5159 / P-2)</name>
    <dbReference type="NCBI Taxonomy" id="309801"/>
    <lineage>
        <taxon>Bacteria</taxon>
        <taxon>Pseudomonadati</taxon>
        <taxon>Thermomicrobiota</taxon>
        <taxon>Thermomicrobia</taxon>
        <taxon>Thermomicrobiales</taxon>
        <taxon>Thermomicrobiaceae</taxon>
        <taxon>Thermomicrobium</taxon>
    </lineage>
</organism>
<sequence>MRFQFKRRLSPRKRRHLRVRAKVFGTPERPRLNVFRSNKHIYAQIIDDTRGHTLVAASTLEKEVRERFPDPHPKIEEARIVGQVVGERALAKGITRVVFDRGGYKYHGRVKALADGARAAGLQF</sequence>
<comment type="function">
    <text evidence="1">This is one of the proteins that bind and probably mediate the attachment of the 5S RNA into the large ribosomal subunit, where it forms part of the central protuberance.</text>
</comment>
<comment type="subunit">
    <text evidence="1">Part of the 50S ribosomal subunit; part of the 5S rRNA/L5/L18/L25 subcomplex. Contacts the 5S and 23S rRNAs.</text>
</comment>
<comment type="similarity">
    <text evidence="1">Belongs to the universal ribosomal protein uL18 family.</text>
</comment>
<reference key="1">
    <citation type="journal article" date="2009" name="PLoS ONE">
        <title>Complete genome sequence of the aerobic CO-oxidizing thermophile Thermomicrobium roseum.</title>
        <authorList>
            <person name="Wu D."/>
            <person name="Raymond J."/>
            <person name="Wu M."/>
            <person name="Chatterji S."/>
            <person name="Ren Q."/>
            <person name="Graham J.E."/>
            <person name="Bryant D.A."/>
            <person name="Robb F."/>
            <person name="Colman A."/>
            <person name="Tallon L.J."/>
            <person name="Badger J.H."/>
            <person name="Madupu R."/>
            <person name="Ward N.L."/>
            <person name="Eisen J.A."/>
        </authorList>
    </citation>
    <scope>NUCLEOTIDE SEQUENCE [LARGE SCALE GENOMIC DNA]</scope>
    <source>
        <strain>ATCC 27502 / DSM 5159 / P-2</strain>
    </source>
</reference>
<keyword id="KW-1185">Reference proteome</keyword>
<keyword id="KW-0687">Ribonucleoprotein</keyword>
<keyword id="KW-0689">Ribosomal protein</keyword>
<keyword id="KW-0694">RNA-binding</keyword>
<keyword id="KW-0699">rRNA-binding</keyword>
<dbReference type="EMBL" id="CP001275">
    <property type="protein sequence ID" value="ACM06061.1"/>
    <property type="molecule type" value="Genomic_DNA"/>
</dbReference>
<dbReference type="RefSeq" id="WP_015921933.1">
    <property type="nucleotide sequence ID" value="NC_011959.1"/>
</dbReference>
<dbReference type="SMR" id="B9KZX2"/>
<dbReference type="STRING" id="309801.trd_0969"/>
<dbReference type="KEGG" id="tro:trd_0969"/>
<dbReference type="eggNOG" id="COG0256">
    <property type="taxonomic scope" value="Bacteria"/>
</dbReference>
<dbReference type="HOGENOM" id="CLU_098841_0_1_0"/>
<dbReference type="OrthoDB" id="9810939at2"/>
<dbReference type="Proteomes" id="UP000000447">
    <property type="component" value="Chromosome"/>
</dbReference>
<dbReference type="GO" id="GO:0022625">
    <property type="term" value="C:cytosolic large ribosomal subunit"/>
    <property type="evidence" value="ECO:0007669"/>
    <property type="project" value="TreeGrafter"/>
</dbReference>
<dbReference type="GO" id="GO:0008097">
    <property type="term" value="F:5S rRNA binding"/>
    <property type="evidence" value="ECO:0007669"/>
    <property type="project" value="TreeGrafter"/>
</dbReference>
<dbReference type="GO" id="GO:0003735">
    <property type="term" value="F:structural constituent of ribosome"/>
    <property type="evidence" value="ECO:0007669"/>
    <property type="project" value="InterPro"/>
</dbReference>
<dbReference type="GO" id="GO:0006412">
    <property type="term" value="P:translation"/>
    <property type="evidence" value="ECO:0007669"/>
    <property type="project" value="UniProtKB-UniRule"/>
</dbReference>
<dbReference type="CDD" id="cd00432">
    <property type="entry name" value="Ribosomal_L18_L5e"/>
    <property type="match status" value="1"/>
</dbReference>
<dbReference type="FunFam" id="3.30.420.100:FF:000001">
    <property type="entry name" value="50S ribosomal protein L18"/>
    <property type="match status" value="1"/>
</dbReference>
<dbReference type="Gene3D" id="3.30.420.100">
    <property type="match status" value="1"/>
</dbReference>
<dbReference type="HAMAP" id="MF_01337_B">
    <property type="entry name" value="Ribosomal_uL18_B"/>
    <property type="match status" value="1"/>
</dbReference>
<dbReference type="InterPro" id="IPR004389">
    <property type="entry name" value="Ribosomal_uL18_bac-type"/>
</dbReference>
<dbReference type="InterPro" id="IPR005484">
    <property type="entry name" value="Ribosomal_uL18_bac/euk"/>
</dbReference>
<dbReference type="NCBIfam" id="TIGR00060">
    <property type="entry name" value="L18_bact"/>
    <property type="match status" value="1"/>
</dbReference>
<dbReference type="PANTHER" id="PTHR12899">
    <property type="entry name" value="39S RIBOSOMAL PROTEIN L18, MITOCHONDRIAL"/>
    <property type="match status" value="1"/>
</dbReference>
<dbReference type="PANTHER" id="PTHR12899:SF3">
    <property type="entry name" value="LARGE RIBOSOMAL SUBUNIT PROTEIN UL18M"/>
    <property type="match status" value="1"/>
</dbReference>
<dbReference type="Pfam" id="PF00861">
    <property type="entry name" value="Ribosomal_L18p"/>
    <property type="match status" value="1"/>
</dbReference>
<dbReference type="SUPFAM" id="SSF53137">
    <property type="entry name" value="Translational machinery components"/>
    <property type="match status" value="1"/>
</dbReference>
<name>RL18_THERP</name>
<proteinExistence type="inferred from homology"/>